<dbReference type="EC" id="5.1.1.3" evidence="1"/>
<dbReference type="EMBL" id="CP000936">
    <property type="protein sequence ID" value="ACA36239.1"/>
    <property type="molecule type" value="Genomic_DNA"/>
</dbReference>
<dbReference type="SMR" id="B1I891"/>
<dbReference type="KEGG" id="spv:SPH_1997"/>
<dbReference type="HOGENOM" id="CLU_052344_0_2_9"/>
<dbReference type="UniPathway" id="UPA00219"/>
<dbReference type="Proteomes" id="UP000002163">
    <property type="component" value="Chromosome"/>
</dbReference>
<dbReference type="GO" id="GO:0008881">
    <property type="term" value="F:glutamate racemase activity"/>
    <property type="evidence" value="ECO:0007669"/>
    <property type="project" value="UniProtKB-UniRule"/>
</dbReference>
<dbReference type="GO" id="GO:0071555">
    <property type="term" value="P:cell wall organization"/>
    <property type="evidence" value="ECO:0007669"/>
    <property type="project" value="UniProtKB-KW"/>
</dbReference>
<dbReference type="GO" id="GO:0009252">
    <property type="term" value="P:peptidoglycan biosynthetic process"/>
    <property type="evidence" value="ECO:0007669"/>
    <property type="project" value="UniProtKB-UniRule"/>
</dbReference>
<dbReference type="GO" id="GO:0008360">
    <property type="term" value="P:regulation of cell shape"/>
    <property type="evidence" value="ECO:0007669"/>
    <property type="project" value="UniProtKB-KW"/>
</dbReference>
<dbReference type="FunFam" id="3.40.50.1860:FF:000002">
    <property type="entry name" value="Glutamate racemase"/>
    <property type="match status" value="1"/>
</dbReference>
<dbReference type="Gene3D" id="3.40.50.1860">
    <property type="match status" value="2"/>
</dbReference>
<dbReference type="HAMAP" id="MF_00258">
    <property type="entry name" value="Glu_racemase"/>
    <property type="match status" value="1"/>
</dbReference>
<dbReference type="InterPro" id="IPR015942">
    <property type="entry name" value="Asp/Glu/hydantoin_racemase"/>
</dbReference>
<dbReference type="InterPro" id="IPR001920">
    <property type="entry name" value="Asp/Glu_race"/>
</dbReference>
<dbReference type="InterPro" id="IPR018187">
    <property type="entry name" value="Asp/Glu_racemase_AS_1"/>
</dbReference>
<dbReference type="InterPro" id="IPR033134">
    <property type="entry name" value="Asp/Glu_racemase_AS_2"/>
</dbReference>
<dbReference type="InterPro" id="IPR004391">
    <property type="entry name" value="Glu_race"/>
</dbReference>
<dbReference type="NCBIfam" id="TIGR00067">
    <property type="entry name" value="glut_race"/>
    <property type="match status" value="1"/>
</dbReference>
<dbReference type="NCBIfam" id="NF002035">
    <property type="entry name" value="PRK00865.1-3"/>
    <property type="match status" value="1"/>
</dbReference>
<dbReference type="PANTHER" id="PTHR21198">
    <property type="entry name" value="GLUTAMATE RACEMASE"/>
    <property type="match status" value="1"/>
</dbReference>
<dbReference type="PANTHER" id="PTHR21198:SF2">
    <property type="entry name" value="GLUTAMATE RACEMASE"/>
    <property type="match status" value="1"/>
</dbReference>
<dbReference type="Pfam" id="PF01177">
    <property type="entry name" value="Asp_Glu_race"/>
    <property type="match status" value="1"/>
</dbReference>
<dbReference type="SUPFAM" id="SSF53681">
    <property type="entry name" value="Aspartate/glutamate racemase"/>
    <property type="match status" value="2"/>
</dbReference>
<dbReference type="PROSITE" id="PS00923">
    <property type="entry name" value="ASP_GLU_RACEMASE_1"/>
    <property type="match status" value="1"/>
</dbReference>
<dbReference type="PROSITE" id="PS00924">
    <property type="entry name" value="ASP_GLU_RACEMASE_2"/>
    <property type="match status" value="1"/>
</dbReference>
<name>MURI_STRPI</name>
<evidence type="ECO:0000255" key="1">
    <source>
        <dbReference type="HAMAP-Rule" id="MF_00258"/>
    </source>
</evidence>
<reference key="1">
    <citation type="journal article" date="2010" name="Genome Biol.">
        <title>Structure and dynamics of the pan-genome of Streptococcus pneumoniae and closely related species.</title>
        <authorList>
            <person name="Donati C."/>
            <person name="Hiller N.L."/>
            <person name="Tettelin H."/>
            <person name="Muzzi A."/>
            <person name="Croucher N.J."/>
            <person name="Angiuoli S.V."/>
            <person name="Oggioni M."/>
            <person name="Dunning Hotopp J.C."/>
            <person name="Hu F.Z."/>
            <person name="Riley D.R."/>
            <person name="Covacci A."/>
            <person name="Mitchell T.J."/>
            <person name="Bentley S.D."/>
            <person name="Kilian M."/>
            <person name="Ehrlich G.D."/>
            <person name="Rappuoli R."/>
            <person name="Moxon E.R."/>
            <person name="Masignani V."/>
        </authorList>
    </citation>
    <scope>NUCLEOTIDE SEQUENCE [LARGE SCALE GENOMIC DNA]</scope>
    <source>
        <strain>Hungary19A-6</strain>
    </source>
</reference>
<organism>
    <name type="scientific">Streptococcus pneumoniae (strain Hungary19A-6)</name>
    <dbReference type="NCBI Taxonomy" id="487214"/>
    <lineage>
        <taxon>Bacteria</taxon>
        <taxon>Bacillati</taxon>
        <taxon>Bacillota</taxon>
        <taxon>Bacilli</taxon>
        <taxon>Lactobacillales</taxon>
        <taxon>Streptococcaceae</taxon>
        <taxon>Streptococcus</taxon>
    </lineage>
</organism>
<keyword id="KW-0133">Cell shape</keyword>
<keyword id="KW-0961">Cell wall biogenesis/degradation</keyword>
<keyword id="KW-0413">Isomerase</keyword>
<keyword id="KW-0573">Peptidoglycan synthesis</keyword>
<proteinExistence type="inferred from homology"/>
<sequence>MDNRPIGFLDSGVGGLTVVRELMRQLPHEEIVYIGDSARAPYGPRPAEQIREYTWQLVNFLLTKDVKMIVIACNTATAVVWEEIKAQLDIPVLGVILPGASAAIKSSQGGKIGVIGTPMTVQSDIYRQKIHDLDPDLQVESLACPKFAPLVESGALSTSVTKKVVYETLRPLVGKVDSLILGCTHYPLLRPIIQNVMGPKVQLIDSGAECVRDISVLLNYFEINRGRDAGPLHHRFYTTASSQSFAQIGEEWLEKEIHVEHVEL</sequence>
<accession>B1I891</accession>
<comment type="function">
    <text evidence="1">Provides the (R)-glutamate required for cell wall biosynthesis.</text>
</comment>
<comment type="catalytic activity">
    <reaction evidence="1">
        <text>L-glutamate = D-glutamate</text>
        <dbReference type="Rhea" id="RHEA:12813"/>
        <dbReference type="ChEBI" id="CHEBI:29985"/>
        <dbReference type="ChEBI" id="CHEBI:29986"/>
        <dbReference type="EC" id="5.1.1.3"/>
    </reaction>
</comment>
<comment type="pathway">
    <text evidence="1">Cell wall biogenesis; peptidoglycan biosynthesis.</text>
</comment>
<comment type="similarity">
    <text evidence="1">Belongs to the aspartate/glutamate racemases family.</text>
</comment>
<protein>
    <recommendedName>
        <fullName evidence="1">Glutamate racemase</fullName>
        <ecNumber evidence="1">5.1.1.3</ecNumber>
    </recommendedName>
</protein>
<feature type="chain" id="PRO_1000114066" description="Glutamate racemase">
    <location>
        <begin position="1"/>
        <end position="264"/>
    </location>
</feature>
<feature type="active site" description="Proton donor/acceptor" evidence="1">
    <location>
        <position position="73"/>
    </location>
</feature>
<feature type="active site" description="Proton donor/acceptor" evidence="1">
    <location>
        <position position="183"/>
    </location>
</feature>
<feature type="binding site" evidence="1">
    <location>
        <begin position="10"/>
        <end position="11"/>
    </location>
    <ligand>
        <name>substrate</name>
    </ligand>
</feature>
<feature type="binding site" evidence="1">
    <location>
        <begin position="42"/>
        <end position="43"/>
    </location>
    <ligand>
        <name>substrate</name>
    </ligand>
</feature>
<feature type="binding site" evidence="1">
    <location>
        <begin position="74"/>
        <end position="75"/>
    </location>
    <ligand>
        <name>substrate</name>
    </ligand>
</feature>
<feature type="binding site" evidence="1">
    <location>
        <begin position="184"/>
        <end position="185"/>
    </location>
    <ligand>
        <name>substrate</name>
    </ligand>
</feature>
<gene>
    <name evidence="1" type="primary">murI</name>
    <name type="ordered locus">SPH_1997</name>
</gene>